<feature type="chain" id="PRO_0000081708" description="Polyadenylate-binding protein 5">
    <location>
        <begin position="1"/>
        <end position="382"/>
    </location>
</feature>
<feature type="domain" description="RRM 1" evidence="2">
    <location>
        <begin position="18"/>
        <end position="96"/>
    </location>
</feature>
<feature type="domain" description="RRM 2" evidence="2">
    <location>
        <begin position="106"/>
        <end position="182"/>
    </location>
</feature>
<feature type="domain" description="RRM 3" evidence="2">
    <location>
        <begin position="199"/>
        <end position="276"/>
    </location>
</feature>
<feature type="domain" description="RRM 4" evidence="2">
    <location>
        <begin position="302"/>
        <end position="378"/>
    </location>
</feature>
<evidence type="ECO:0000250" key="1"/>
<evidence type="ECO:0000255" key="2">
    <source>
        <dbReference type="PROSITE-ProRule" id="PRU00176"/>
    </source>
</evidence>
<dbReference type="EMBL" id="AJ299077">
    <property type="protein sequence ID" value="CAC42823.1"/>
    <property type="molecule type" value="Genomic_DNA"/>
</dbReference>
<dbReference type="RefSeq" id="NP_001065269.1">
    <property type="nucleotide sequence ID" value="NM_001071801.1"/>
</dbReference>
<dbReference type="RefSeq" id="XP_009437581.1">
    <property type="nucleotide sequence ID" value="XM_009439306.3"/>
</dbReference>
<dbReference type="SMR" id="P60049"/>
<dbReference type="FunCoup" id="P60049">
    <property type="interactions" value="204"/>
</dbReference>
<dbReference type="STRING" id="9598.ENSPTRP00000056253"/>
<dbReference type="PaxDb" id="9598-ENSPTRP00000056253"/>
<dbReference type="Ensembl" id="ENSPTRT00000064692.2">
    <property type="protein sequence ID" value="ENSPTRP00000056253.1"/>
    <property type="gene ID" value="ENSPTRG00000022078.5"/>
</dbReference>
<dbReference type="GeneID" id="465742"/>
<dbReference type="KEGG" id="ptr:465742"/>
<dbReference type="CTD" id="140886"/>
<dbReference type="VGNC" id="VGNC:10178">
    <property type="gene designation" value="PABPC5"/>
</dbReference>
<dbReference type="eggNOG" id="KOG0123">
    <property type="taxonomic scope" value="Eukaryota"/>
</dbReference>
<dbReference type="GeneTree" id="ENSGT00940000162668"/>
<dbReference type="HOGENOM" id="CLU_012062_22_6_1"/>
<dbReference type="InParanoid" id="P60049"/>
<dbReference type="OMA" id="CTIFVFY"/>
<dbReference type="OrthoDB" id="5832at9604"/>
<dbReference type="TreeFam" id="TF300458"/>
<dbReference type="Proteomes" id="UP000002277">
    <property type="component" value="Chromosome X"/>
</dbReference>
<dbReference type="Bgee" id="ENSPTRG00000022078">
    <property type="expression patterns" value="Expressed in fibroblast and 15 other cell types or tissues"/>
</dbReference>
<dbReference type="GO" id="GO:0010494">
    <property type="term" value="C:cytoplasmic stress granule"/>
    <property type="evidence" value="ECO:0000318"/>
    <property type="project" value="GO_Central"/>
</dbReference>
<dbReference type="GO" id="GO:0005829">
    <property type="term" value="C:cytosol"/>
    <property type="evidence" value="ECO:0000318"/>
    <property type="project" value="GO_Central"/>
</dbReference>
<dbReference type="GO" id="GO:0005634">
    <property type="term" value="C:nucleus"/>
    <property type="evidence" value="ECO:0000318"/>
    <property type="project" value="GO_Central"/>
</dbReference>
<dbReference type="GO" id="GO:1990904">
    <property type="term" value="C:ribonucleoprotein complex"/>
    <property type="evidence" value="ECO:0000318"/>
    <property type="project" value="GO_Central"/>
</dbReference>
<dbReference type="GO" id="GO:0003730">
    <property type="term" value="F:mRNA 3'-UTR binding"/>
    <property type="evidence" value="ECO:0000318"/>
    <property type="project" value="GO_Central"/>
</dbReference>
<dbReference type="GO" id="GO:0008143">
    <property type="term" value="F:poly(A) binding"/>
    <property type="evidence" value="ECO:0000318"/>
    <property type="project" value="GO_Central"/>
</dbReference>
<dbReference type="GO" id="GO:0008266">
    <property type="term" value="F:poly(U) RNA binding"/>
    <property type="evidence" value="ECO:0000318"/>
    <property type="project" value="GO_Central"/>
</dbReference>
<dbReference type="CDD" id="cd12378">
    <property type="entry name" value="RRM1_I_PABPs"/>
    <property type="match status" value="1"/>
</dbReference>
<dbReference type="CDD" id="cd12379">
    <property type="entry name" value="RRM2_I_PABPs"/>
    <property type="match status" value="1"/>
</dbReference>
<dbReference type="CDD" id="cd12380">
    <property type="entry name" value="RRM3_I_PABPs"/>
    <property type="match status" value="1"/>
</dbReference>
<dbReference type="FunFam" id="3.30.70.330:FF:000003">
    <property type="entry name" value="Polyadenylate-binding protein"/>
    <property type="match status" value="1"/>
</dbReference>
<dbReference type="FunFam" id="3.30.70.330:FF:000049">
    <property type="entry name" value="Polyadenylate-binding protein"/>
    <property type="match status" value="1"/>
</dbReference>
<dbReference type="FunFam" id="3.30.70.330:FF:000234">
    <property type="entry name" value="Polyadenylate-binding protein 5"/>
    <property type="match status" value="1"/>
</dbReference>
<dbReference type="FunFam" id="3.30.70.330:FF:000338">
    <property type="entry name" value="polyadenylate-binding protein 5"/>
    <property type="match status" value="1"/>
</dbReference>
<dbReference type="Gene3D" id="3.30.70.330">
    <property type="match status" value="4"/>
</dbReference>
<dbReference type="InterPro" id="IPR012677">
    <property type="entry name" value="Nucleotide-bd_a/b_plait_sf"/>
</dbReference>
<dbReference type="InterPro" id="IPR006515">
    <property type="entry name" value="PABP_1234"/>
</dbReference>
<dbReference type="InterPro" id="IPR034364">
    <property type="entry name" value="PABP_RRM1"/>
</dbReference>
<dbReference type="InterPro" id="IPR035979">
    <property type="entry name" value="RBD_domain_sf"/>
</dbReference>
<dbReference type="InterPro" id="IPR045305">
    <property type="entry name" value="RRM2_I_PABPs"/>
</dbReference>
<dbReference type="InterPro" id="IPR000504">
    <property type="entry name" value="RRM_dom"/>
</dbReference>
<dbReference type="InterPro" id="IPR003954">
    <property type="entry name" value="RRM_dom_euk"/>
</dbReference>
<dbReference type="NCBIfam" id="TIGR01628">
    <property type="entry name" value="PABP-1234"/>
    <property type="match status" value="1"/>
</dbReference>
<dbReference type="PANTHER" id="PTHR24012">
    <property type="entry name" value="RNA BINDING PROTEIN"/>
    <property type="match status" value="1"/>
</dbReference>
<dbReference type="Pfam" id="PF00076">
    <property type="entry name" value="RRM_1"/>
    <property type="match status" value="4"/>
</dbReference>
<dbReference type="SMART" id="SM00360">
    <property type="entry name" value="RRM"/>
    <property type="match status" value="4"/>
</dbReference>
<dbReference type="SMART" id="SM00361">
    <property type="entry name" value="RRM_1"/>
    <property type="match status" value="3"/>
</dbReference>
<dbReference type="SUPFAM" id="SSF54928">
    <property type="entry name" value="RNA-binding domain, RBD"/>
    <property type="match status" value="2"/>
</dbReference>
<dbReference type="PROSITE" id="PS50102">
    <property type="entry name" value="RRM"/>
    <property type="match status" value="4"/>
</dbReference>
<organism>
    <name type="scientific">Pan troglodytes</name>
    <name type="common">Chimpanzee</name>
    <dbReference type="NCBI Taxonomy" id="9598"/>
    <lineage>
        <taxon>Eukaryota</taxon>
        <taxon>Metazoa</taxon>
        <taxon>Chordata</taxon>
        <taxon>Craniata</taxon>
        <taxon>Vertebrata</taxon>
        <taxon>Euteleostomi</taxon>
        <taxon>Mammalia</taxon>
        <taxon>Eutheria</taxon>
        <taxon>Euarchontoglires</taxon>
        <taxon>Primates</taxon>
        <taxon>Haplorrhini</taxon>
        <taxon>Catarrhini</taxon>
        <taxon>Hominidae</taxon>
        <taxon>Pan</taxon>
    </lineage>
</organism>
<comment type="function">
    <text evidence="1">Binds the poly(A) tail of mRNA. May be involved in cytoplasmic regulatory processes of mRNA metabolism. Can probably bind to cytoplasmic RNA sequences other than poly(A) in vivo (By similarity).</text>
</comment>
<comment type="subcellular location">
    <subcellularLocation>
        <location evidence="1">Cytoplasm</location>
    </subcellularLocation>
</comment>
<keyword id="KW-0963">Cytoplasm</keyword>
<keyword id="KW-1185">Reference proteome</keyword>
<keyword id="KW-0677">Repeat</keyword>
<keyword id="KW-0694">RNA-binding</keyword>
<sequence>MGSGEPNPAGKKKKYLKAALYVGDLDPDVTEDMLYKKFRPAGPLRFTRICRDPVTRSPLGYGYVNFRFPADAEWALNTMNFDLINGKPFRLMWSQPDDRLRKSGVGNIFIKNLDKSIDNRALFYLFSAFGNILSCKVVCDDNGSKGYAYVHFDSLAAANRAIWHMNGVRLNNRQVYVGRFKFPEERAAEVRTRDRATFTNVFVKNIGDDIDDEKLKELFCEYGPTESVKVIRDASGKSKGFGFVRYETHEAAQKAVLDLHGKSIDGKVLYVGRAQKKIERLAELRRRFERLRLKEKSRPPGVPIYIKNLDETINDEKLKEEFSSFGSISRAKVMMEVGQGKGFGVVCFSSFEEATKAVDEMNGRIVGSKPLHVTLGQARRRC</sequence>
<name>PABP5_PANTR</name>
<gene>
    <name type="primary">PABPC5</name>
    <name type="synonym">PABP5</name>
</gene>
<proteinExistence type="inferred from homology"/>
<reference key="1">
    <citation type="journal article" date="2001" name="Genomics">
        <title>A novel poly(A)-binding protein gene (PABPC5) maps to an X-specific subinterval in the Xq21.3/Yp11.2 homology block of the human sex chromosomes.</title>
        <authorList>
            <person name="Blanco P."/>
            <person name="Sargent C.A."/>
            <person name="Boucher C.A."/>
            <person name="Howell G."/>
            <person name="Ross M."/>
            <person name="Affara N.A."/>
        </authorList>
    </citation>
    <scope>NUCLEOTIDE SEQUENCE [GENOMIC DNA]</scope>
</reference>
<protein>
    <recommendedName>
        <fullName>Polyadenylate-binding protein 5</fullName>
        <shortName>PABP-5</shortName>
        <shortName>Poly(A)-binding protein 5</shortName>
    </recommendedName>
</protein>
<accession>P60049</accession>
<accession>Q95J70</accession>